<keyword id="KW-0042">Antenna complex</keyword>
<keyword id="KW-0089">Bile pigment</keyword>
<keyword id="KW-0150">Chloroplast</keyword>
<keyword id="KW-0157">Chromophore</keyword>
<keyword id="KW-0249">Electron transport</keyword>
<keyword id="KW-0472">Membrane</keyword>
<keyword id="KW-0602">Photosynthesis</keyword>
<keyword id="KW-0605">Phycobilisome</keyword>
<keyword id="KW-0934">Plastid</keyword>
<keyword id="KW-0793">Thylakoid</keyword>
<keyword id="KW-0813">Transport</keyword>
<protein>
    <recommendedName>
        <fullName>R-phycoerythrin alpha chain</fullName>
    </recommendedName>
</protein>
<geneLocation type="chloroplast"/>
<organism>
    <name type="scientific">Aglaothamnion neglectum</name>
    <name type="common">Red alga</name>
    <dbReference type="NCBI Taxonomy" id="2765"/>
    <lineage>
        <taxon>Eukaryota</taxon>
        <taxon>Rhodophyta</taxon>
        <taxon>Florideophyceae</taxon>
        <taxon>Rhodymeniophycidae</taxon>
        <taxon>Ceramiales</taxon>
        <taxon>Callithamniaceae</taxon>
        <taxon>Aglaothamnion</taxon>
    </lineage>
</organism>
<proteinExistence type="inferred from homology"/>
<name>PHEA_AGLNE</name>
<feature type="chain" id="PRO_0000199172" description="R-phycoerythrin alpha chain">
    <location>
        <begin position="1"/>
        <end position="163"/>
    </location>
</feature>
<feature type="binding site" description="covalent" evidence="1">
    <location>
        <position position="82"/>
    </location>
    <ligand>
        <name>(2R,3E)-phycoerythrobilin</name>
        <dbReference type="ChEBI" id="CHEBI:85276"/>
        <label>1</label>
    </ligand>
</feature>
<feature type="binding site" description="covalent" evidence="1">
    <location>
        <position position="139"/>
    </location>
    <ligand>
        <name>(2R,3E)-phycoerythrobilin</name>
        <dbReference type="ChEBI" id="CHEBI:85276"/>
        <label>2</label>
    </ligand>
</feature>
<comment type="function">
    <text>Light-harvesting photosynthetic bile pigment-protein from the phycobiliprotein complex.</text>
</comment>
<comment type="subunit">
    <text evidence="1">Heterodimer of an alpha and a beta chain.</text>
</comment>
<comment type="subcellular location">
    <subcellularLocation>
        <location evidence="1">Plastid</location>
        <location evidence="1">Chloroplast thylakoid membrane</location>
        <topology evidence="1">Peripheral membrane protein</topology>
        <orientation evidence="1">Stromal side</orientation>
    </subcellularLocation>
    <text evidence="1">Forms the periphery of the phycobilisome rod.</text>
</comment>
<comment type="PTM">
    <text evidence="1">Contains two covalently linked bilin chromophores.</text>
</comment>
<comment type="similarity">
    <text evidence="2">Belongs to the phycobiliprotein family.</text>
</comment>
<evidence type="ECO:0000250" key="1"/>
<evidence type="ECO:0000305" key="2"/>
<accession>P28559</accession>
<gene>
    <name type="primary">cpeA</name>
    <name type="synonym">rpeA</name>
</gene>
<sequence>MKSVITTTISARDAAGRFPSRSDLESVQGNIQRSAARLEAAEKISAGHEGVVKEAGDACFAKYTYLKTSGEAGDSQDKVNKCYRDIDHYMRLINYSLVVGGTGPLDEWGIAGAREVYRALNLPASAYIAAFAYTRDRVCVPRDMSAQAAVEFIGALDYVNSLS</sequence>
<dbReference type="EMBL" id="Z11907">
    <property type="protein sequence ID" value="CAA77963.1"/>
    <property type="molecule type" value="Genomic_DNA"/>
</dbReference>
<dbReference type="PIR" id="S30942">
    <property type="entry name" value="S30942"/>
</dbReference>
<dbReference type="SMR" id="P28559"/>
<dbReference type="GO" id="GO:0009535">
    <property type="term" value="C:chloroplast thylakoid membrane"/>
    <property type="evidence" value="ECO:0007669"/>
    <property type="project" value="UniProtKB-SubCell"/>
</dbReference>
<dbReference type="GO" id="GO:0030089">
    <property type="term" value="C:phycobilisome"/>
    <property type="evidence" value="ECO:0007669"/>
    <property type="project" value="UniProtKB-KW"/>
</dbReference>
<dbReference type="GO" id="GO:0015979">
    <property type="term" value="P:photosynthesis"/>
    <property type="evidence" value="ECO:0007669"/>
    <property type="project" value="UniProtKB-KW"/>
</dbReference>
<dbReference type="CDD" id="cd14769">
    <property type="entry name" value="PE_alpha"/>
    <property type="match status" value="1"/>
</dbReference>
<dbReference type="Gene3D" id="1.10.490.20">
    <property type="entry name" value="Phycocyanins"/>
    <property type="match status" value="1"/>
</dbReference>
<dbReference type="InterPro" id="IPR009050">
    <property type="entry name" value="Globin-like_sf"/>
</dbReference>
<dbReference type="InterPro" id="IPR012128">
    <property type="entry name" value="Phycobilisome_asu/bsu"/>
</dbReference>
<dbReference type="InterPro" id="IPR038719">
    <property type="entry name" value="Phycobilisome_asu/bsu_sf"/>
</dbReference>
<dbReference type="PANTHER" id="PTHR34011:SF4">
    <property type="entry name" value="C-PHYCOCYANIN ALPHA SUBUNIT"/>
    <property type="match status" value="1"/>
</dbReference>
<dbReference type="PANTHER" id="PTHR34011">
    <property type="entry name" value="PHYCOBILISOME 32.1 KDA LINKER POLYPEPTIDE, PHYCOCYANIN-ASSOCIATED, ROD 2-RELATED"/>
    <property type="match status" value="1"/>
</dbReference>
<dbReference type="Pfam" id="PF00502">
    <property type="entry name" value="Phycobilisome"/>
    <property type="match status" value="1"/>
</dbReference>
<dbReference type="PIRSF" id="PIRSF000081">
    <property type="entry name" value="Phycocyanin"/>
    <property type="match status" value="1"/>
</dbReference>
<dbReference type="SUPFAM" id="SSF46458">
    <property type="entry name" value="Globin-like"/>
    <property type="match status" value="1"/>
</dbReference>
<reference key="1">
    <citation type="journal article" date="1993" name="Plant Mol. Biol.">
        <title>Characterization and transcript analysis of the major phycobiliprotein subunit genes from Aglaothamnion neglectum (Rhodophyta).</title>
        <authorList>
            <person name="Apt K.E."/>
            <person name="Grossman A.R."/>
        </authorList>
    </citation>
    <scope>NUCLEOTIDE SEQUENCE [GENOMIC DNA]</scope>
</reference>